<gene>
    <name evidence="1" type="primary">smpB</name>
    <name type="ordered locus">EAT1b_0851</name>
</gene>
<reference key="1">
    <citation type="journal article" date="2011" name="J. Bacteriol.">
        <title>Complete genome sequence of the Thermophilic Bacterium Exiguobacterium sp. AT1b.</title>
        <authorList>
            <person name="Vishnivetskaya T.A."/>
            <person name="Lucas S."/>
            <person name="Copeland A."/>
            <person name="Lapidus A."/>
            <person name="Glavina del Rio T."/>
            <person name="Dalin E."/>
            <person name="Tice H."/>
            <person name="Bruce D.C."/>
            <person name="Goodwin L.A."/>
            <person name="Pitluck S."/>
            <person name="Saunders E."/>
            <person name="Brettin T."/>
            <person name="Detter C."/>
            <person name="Han C."/>
            <person name="Larimer F."/>
            <person name="Land M.L."/>
            <person name="Hauser L.J."/>
            <person name="Kyrpides N.C."/>
            <person name="Ovchinnikova G."/>
            <person name="Kathariou S."/>
            <person name="Ramaley R.F."/>
            <person name="Rodrigues D.F."/>
            <person name="Hendrix C."/>
            <person name="Richardson P."/>
            <person name="Tiedje J.M."/>
        </authorList>
    </citation>
    <scope>NUCLEOTIDE SEQUENCE [LARGE SCALE GENOMIC DNA]</scope>
    <source>
        <strain>ATCC BAA-1283 / AT1b</strain>
    </source>
</reference>
<name>SSRP_EXISA</name>
<accession>C4L5G5</accession>
<organism>
    <name type="scientific">Exiguobacterium sp. (strain ATCC BAA-1283 / AT1b)</name>
    <dbReference type="NCBI Taxonomy" id="360911"/>
    <lineage>
        <taxon>Bacteria</taxon>
        <taxon>Bacillati</taxon>
        <taxon>Bacillota</taxon>
        <taxon>Bacilli</taxon>
        <taxon>Bacillales</taxon>
        <taxon>Bacillales Family XII. Incertae Sedis</taxon>
        <taxon>Exiguobacterium</taxon>
    </lineage>
</organism>
<evidence type="ECO:0000255" key="1">
    <source>
        <dbReference type="HAMAP-Rule" id="MF_00023"/>
    </source>
</evidence>
<evidence type="ECO:0000256" key="2">
    <source>
        <dbReference type="SAM" id="MobiDB-lite"/>
    </source>
</evidence>
<protein>
    <recommendedName>
        <fullName evidence="1">SsrA-binding protein</fullName>
    </recommendedName>
    <alternativeName>
        <fullName evidence="1">Small protein B</fullName>
    </alternativeName>
</protein>
<proteinExistence type="inferred from homology"/>
<keyword id="KW-0963">Cytoplasm</keyword>
<keyword id="KW-0694">RNA-binding</keyword>
<comment type="function">
    <text evidence="1">Required for rescue of stalled ribosomes mediated by trans-translation. Binds to transfer-messenger RNA (tmRNA), required for stable association of tmRNA with ribosomes. tmRNA and SmpB together mimic tRNA shape, replacing the anticodon stem-loop with SmpB. tmRNA is encoded by the ssrA gene; the 2 termini fold to resemble tRNA(Ala) and it encodes a 'tag peptide', a short internal open reading frame. During trans-translation Ala-aminoacylated tmRNA acts like a tRNA, entering the A-site of stalled ribosomes, displacing the stalled mRNA. The ribosome then switches to translate the ORF on the tmRNA; the nascent peptide is terminated with the 'tag peptide' encoded by the tmRNA and targeted for degradation. The ribosome is freed to recommence translation, which seems to be the essential function of trans-translation.</text>
</comment>
<comment type="subcellular location">
    <subcellularLocation>
        <location evidence="1">Cytoplasm</location>
    </subcellularLocation>
    <text evidence="1">The tmRNA-SmpB complex associates with stalled 70S ribosomes.</text>
</comment>
<comment type="similarity">
    <text evidence="1">Belongs to the SmpB family.</text>
</comment>
<dbReference type="EMBL" id="CP001615">
    <property type="protein sequence ID" value="ACQ69780.1"/>
    <property type="molecule type" value="Genomic_DNA"/>
</dbReference>
<dbReference type="RefSeq" id="WP_012726899.1">
    <property type="nucleotide sequence ID" value="NZ_MOEL01000008.1"/>
</dbReference>
<dbReference type="SMR" id="C4L5G5"/>
<dbReference type="STRING" id="360911.EAT1b_0851"/>
<dbReference type="GeneID" id="94371500"/>
<dbReference type="KEGG" id="eat:EAT1b_0851"/>
<dbReference type="eggNOG" id="COG0691">
    <property type="taxonomic scope" value="Bacteria"/>
</dbReference>
<dbReference type="HOGENOM" id="CLU_108953_0_0_9"/>
<dbReference type="OrthoDB" id="9805462at2"/>
<dbReference type="Proteomes" id="UP000000716">
    <property type="component" value="Chromosome"/>
</dbReference>
<dbReference type="GO" id="GO:0005829">
    <property type="term" value="C:cytosol"/>
    <property type="evidence" value="ECO:0007669"/>
    <property type="project" value="TreeGrafter"/>
</dbReference>
<dbReference type="GO" id="GO:0003723">
    <property type="term" value="F:RNA binding"/>
    <property type="evidence" value="ECO:0007669"/>
    <property type="project" value="UniProtKB-UniRule"/>
</dbReference>
<dbReference type="GO" id="GO:0070929">
    <property type="term" value="P:trans-translation"/>
    <property type="evidence" value="ECO:0007669"/>
    <property type="project" value="UniProtKB-UniRule"/>
</dbReference>
<dbReference type="CDD" id="cd09294">
    <property type="entry name" value="SmpB"/>
    <property type="match status" value="1"/>
</dbReference>
<dbReference type="Gene3D" id="2.40.280.10">
    <property type="match status" value="1"/>
</dbReference>
<dbReference type="HAMAP" id="MF_00023">
    <property type="entry name" value="SmpB"/>
    <property type="match status" value="1"/>
</dbReference>
<dbReference type="InterPro" id="IPR023620">
    <property type="entry name" value="SmpB"/>
</dbReference>
<dbReference type="InterPro" id="IPR000037">
    <property type="entry name" value="SsrA-bd_prot"/>
</dbReference>
<dbReference type="InterPro" id="IPR020081">
    <property type="entry name" value="SsrA-bd_prot_CS"/>
</dbReference>
<dbReference type="NCBIfam" id="NF003843">
    <property type="entry name" value="PRK05422.1"/>
    <property type="match status" value="1"/>
</dbReference>
<dbReference type="NCBIfam" id="TIGR00086">
    <property type="entry name" value="smpB"/>
    <property type="match status" value="1"/>
</dbReference>
<dbReference type="PANTHER" id="PTHR30308:SF2">
    <property type="entry name" value="SSRA-BINDING PROTEIN"/>
    <property type="match status" value="1"/>
</dbReference>
<dbReference type="PANTHER" id="PTHR30308">
    <property type="entry name" value="TMRNA-BINDING COMPONENT OF TRANS-TRANSLATION TAGGING COMPLEX"/>
    <property type="match status" value="1"/>
</dbReference>
<dbReference type="Pfam" id="PF01668">
    <property type="entry name" value="SmpB"/>
    <property type="match status" value="1"/>
</dbReference>
<dbReference type="SUPFAM" id="SSF74982">
    <property type="entry name" value="Small protein B (SmpB)"/>
    <property type="match status" value="1"/>
</dbReference>
<dbReference type="PROSITE" id="PS01317">
    <property type="entry name" value="SSRP"/>
    <property type="match status" value="1"/>
</dbReference>
<sequence>MAKKKDSNALAQNRKASFDYAIEDTIEAGMVLTGTEIKSVRQSKINIADAYVRFDGGEATLHNCHISPFEQGNRFNHDPLRVRKLLLHKKQINQLIGASGRDGYTIIPLKVYIKNGFAKCLLGVGKGKKKYDKREDLKKKDAKRDVDRAMRDRQKY</sequence>
<feature type="chain" id="PRO_1000201934" description="SsrA-binding protein">
    <location>
        <begin position="1"/>
        <end position="156"/>
    </location>
</feature>
<feature type="region of interest" description="Disordered" evidence="2">
    <location>
        <begin position="127"/>
        <end position="156"/>
    </location>
</feature>
<feature type="compositionally biased region" description="Basic and acidic residues" evidence="2">
    <location>
        <begin position="132"/>
        <end position="156"/>
    </location>
</feature>